<name>GWT1_SCHPO</name>
<reference key="1">
    <citation type="journal article" date="2003" name="J. Biol. Chem.">
        <title>GWT1 gene is required for inositol acylation of glycosylphosphatidylinositol anchors in yeast.</title>
        <authorList>
            <person name="Umemura M."/>
            <person name="Okamoto M."/>
            <person name="Nakayama K."/>
            <person name="Sagane K."/>
            <person name="Tsukahara K."/>
            <person name="Hata K."/>
            <person name="Jigami Y."/>
        </authorList>
    </citation>
    <scope>NUCLEOTIDE SEQUENCE [GENOMIC DNA]</scope>
    <scope>FUNCTION</scope>
    <scope>SUBCELLULAR LOCATION</scope>
</reference>
<reference key="2">
    <citation type="journal article" date="2002" name="Nature">
        <title>The genome sequence of Schizosaccharomyces pombe.</title>
        <authorList>
            <person name="Wood V."/>
            <person name="Gwilliam R."/>
            <person name="Rajandream M.A."/>
            <person name="Lyne M.H."/>
            <person name="Lyne R."/>
            <person name="Stewart A."/>
            <person name="Sgouros J.G."/>
            <person name="Peat N."/>
            <person name="Hayles J."/>
            <person name="Baker S.G."/>
            <person name="Basham D."/>
            <person name="Bowman S."/>
            <person name="Brooks K."/>
            <person name="Brown D."/>
            <person name="Brown S."/>
            <person name="Chillingworth T."/>
            <person name="Churcher C.M."/>
            <person name="Collins M."/>
            <person name="Connor R."/>
            <person name="Cronin A."/>
            <person name="Davis P."/>
            <person name="Feltwell T."/>
            <person name="Fraser A."/>
            <person name="Gentles S."/>
            <person name="Goble A."/>
            <person name="Hamlin N."/>
            <person name="Harris D.E."/>
            <person name="Hidalgo J."/>
            <person name="Hodgson G."/>
            <person name="Holroyd S."/>
            <person name="Hornsby T."/>
            <person name="Howarth S."/>
            <person name="Huckle E.J."/>
            <person name="Hunt S."/>
            <person name="Jagels K."/>
            <person name="James K.D."/>
            <person name="Jones L."/>
            <person name="Jones M."/>
            <person name="Leather S."/>
            <person name="McDonald S."/>
            <person name="McLean J."/>
            <person name="Mooney P."/>
            <person name="Moule S."/>
            <person name="Mungall K.L."/>
            <person name="Murphy L.D."/>
            <person name="Niblett D."/>
            <person name="Odell C."/>
            <person name="Oliver K."/>
            <person name="O'Neil S."/>
            <person name="Pearson D."/>
            <person name="Quail M.A."/>
            <person name="Rabbinowitsch E."/>
            <person name="Rutherford K.M."/>
            <person name="Rutter S."/>
            <person name="Saunders D."/>
            <person name="Seeger K."/>
            <person name="Sharp S."/>
            <person name="Skelton J."/>
            <person name="Simmonds M.N."/>
            <person name="Squares R."/>
            <person name="Squares S."/>
            <person name="Stevens K."/>
            <person name="Taylor K."/>
            <person name="Taylor R.G."/>
            <person name="Tivey A."/>
            <person name="Walsh S.V."/>
            <person name="Warren T."/>
            <person name="Whitehead S."/>
            <person name="Woodward J.R."/>
            <person name="Volckaert G."/>
            <person name="Aert R."/>
            <person name="Robben J."/>
            <person name="Grymonprez B."/>
            <person name="Weltjens I."/>
            <person name="Vanstreels E."/>
            <person name="Rieger M."/>
            <person name="Schaefer M."/>
            <person name="Mueller-Auer S."/>
            <person name="Gabel C."/>
            <person name="Fuchs M."/>
            <person name="Duesterhoeft A."/>
            <person name="Fritzc C."/>
            <person name="Holzer E."/>
            <person name="Moestl D."/>
            <person name="Hilbert H."/>
            <person name="Borzym K."/>
            <person name="Langer I."/>
            <person name="Beck A."/>
            <person name="Lehrach H."/>
            <person name="Reinhardt R."/>
            <person name="Pohl T.M."/>
            <person name="Eger P."/>
            <person name="Zimmermann W."/>
            <person name="Wedler H."/>
            <person name="Wambutt R."/>
            <person name="Purnelle B."/>
            <person name="Goffeau A."/>
            <person name="Cadieu E."/>
            <person name="Dreano S."/>
            <person name="Gloux S."/>
            <person name="Lelaure V."/>
            <person name="Mottier S."/>
            <person name="Galibert F."/>
            <person name="Aves S.J."/>
            <person name="Xiang Z."/>
            <person name="Hunt C."/>
            <person name="Moore K."/>
            <person name="Hurst S.M."/>
            <person name="Lucas M."/>
            <person name="Rochet M."/>
            <person name="Gaillardin C."/>
            <person name="Tallada V.A."/>
            <person name="Garzon A."/>
            <person name="Thode G."/>
            <person name="Daga R.R."/>
            <person name="Cruzado L."/>
            <person name="Jimenez J."/>
            <person name="Sanchez M."/>
            <person name="del Rey F."/>
            <person name="Benito J."/>
            <person name="Dominguez A."/>
            <person name="Revuelta J.L."/>
            <person name="Moreno S."/>
            <person name="Armstrong J."/>
            <person name="Forsburg S.L."/>
            <person name="Cerutti L."/>
            <person name="Lowe T."/>
            <person name="McCombie W.R."/>
            <person name="Paulsen I."/>
            <person name="Potashkin J."/>
            <person name="Shpakovski G.V."/>
            <person name="Ussery D."/>
            <person name="Barrell B.G."/>
            <person name="Nurse P."/>
        </authorList>
    </citation>
    <scope>NUCLEOTIDE SEQUENCE [LARGE SCALE GENOMIC DNA]</scope>
    <source>
        <strain>972 / ATCC 24843</strain>
    </source>
</reference>
<reference key="3">
    <citation type="journal article" date="2005" name="Curr. Biol.">
        <title>A large-scale screen in S. pombe identifies seven novel genes required for critical meiotic events.</title>
        <authorList>
            <person name="Martin-Castellanos C."/>
            <person name="Blanco M."/>
            <person name="Rozalen A.E."/>
            <person name="Perez-Hidalgo L."/>
            <person name="Garcia A.I."/>
            <person name="Conde F."/>
            <person name="Mata J."/>
            <person name="Ellermeier C."/>
            <person name="Davis L."/>
            <person name="San-Segundo P."/>
            <person name="Smith G.R."/>
            <person name="Moreno S."/>
        </authorList>
    </citation>
    <scope>FUNCTION IN MEIOSIS</scope>
</reference>
<protein>
    <recommendedName>
        <fullName>GPI-anchored wall transfer protein 1</fullName>
        <ecNumber>2.3.-.-</ecNumber>
    </recommendedName>
    <alternativeName>
        <fullName>Meiotically up-regulated gene 59 protein</fullName>
    </alternativeName>
</protein>
<sequence>MSYKLEKEAFVSNLTGSSSIETCGLLLIGIACNVLWVNMTARNILPKGNLGFLVEFFIFCLIPLFVIYVSSKVGVFTLCIASFLPSFVLHVISPINWDVLRRKPGCCLTKKNENTFDRRIAGVTFYRSQMMLVTVTCILAVDFTLFPRRYAKVETWGTSLMDLGVGSFMFSSGTVAGRKNDIKKPNAFKNVLWNSFILLILGFARMFLTKSINYQEHVSEYGMHWNFFFTLGFMALGVFFFRRSLKKVSYFNLATFITLLHHCLLVLTPFQKWALSAPRTNILAQNREGIASLPGYIAIYFYGMYTGSVVLADRPLMYTRAESWKRFQRLLFPLCILLVLYLVSNFLSVGVSRRLANTPYVANVAFINMFFLTIYILIDAYLFPSSVPYGSRVPKLLEDANNNGLLVFLIANVLTGVVNLSFDTLHSSNAKGLTIMTMYLFIICYMAHWLAQHGIRFRL</sequence>
<dbReference type="EC" id="2.3.-.-"/>
<dbReference type="EMBL" id="CU329670">
    <property type="protein sequence ID" value="CAB59690.1"/>
    <property type="molecule type" value="Genomic_DNA"/>
</dbReference>
<dbReference type="PIR" id="T37677">
    <property type="entry name" value="T37677"/>
</dbReference>
<dbReference type="RefSeq" id="NP_594671.1">
    <property type="nucleotide sequence ID" value="NM_001020100.2"/>
</dbReference>
<dbReference type="SMR" id="Q9UTL4"/>
<dbReference type="BioGRID" id="279272">
    <property type="interactions" value="1"/>
</dbReference>
<dbReference type="FunCoup" id="Q9UTL4">
    <property type="interactions" value="129"/>
</dbReference>
<dbReference type="STRING" id="284812.Q9UTL4"/>
<dbReference type="GlyCosmos" id="Q9UTL4">
    <property type="glycosylation" value="1 site, No reported glycans"/>
</dbReference>
<dbReference type="iPTMnet" id="Q9UTL4"/>
<dbReference type="PaxDb" id="4896-SPAC144.10c.1"/>
<dbReference type="EnsemblFungi" id="SPAC144.10c.1">
    <property type="protein sequence ID" value="SPAC144.10c.1:pep"/>
    <property type="gene ID" value="SPAC144.10c"/>
</dbReference>
<dbReference type="GeneID" id="2542825"/>
<dbReference type="KEGG" id="spo:2542825"/>
<dbReference type="PomBase" id="SPAC144.10c">
    <property type="gene designation" value="gwt1"/>
</dbReference>
<dbReference type="VEuPathDB" id="FungiDB:SPAC144.10c"/>
<dbReference type="eggNOG" id="KOG0411">
    <property type="taxonomic scope" value="Eukaryota"/>
</dbReference>
<dbReference type="HOGENOM" id="CLU_020802_2_2_1"/>
<dbReference type="InParanoid" id="Q9UTL4"/>
<dbReference type="OMA" id="GLYVMQP"/>
<dbReference type="PhylomeDB" id="Q9UTL4"/>
<dbReference type="Reactome" id="R-SPO-162710">
    <property type="pathway name" value="Synthesis of glycosylphosphatidylinositol (GPI)"/>
</dbReference>
<dbReference type="UniPathway" id="UPA00196"/>
<dbReference type="PRO" id="PR:Q9UTL4"/>
<dbReference type="Proteomes" id="UP000002485">
    <property type="component" value="Chromosome I"/>
</dbReference>
<dbReference type="GO" id="GO:0005789">
    <property type="term" value="C:endoplasmic reticulum membrane"/>
    <property type="evidence" value="ECO:0000266"/>
    <property type="project" value="PomBase"/>
</dbReference>
<dbReference type="GO" id="GO:0032216">
    <property type="term" value="F:glucosaminyl-phosphatidylinositol O-acyltransferase activity"/>
    <property type="evidence" value="ECO:0000316"/>
    <property type="project" value="PomBase"/>
</dbReference>
<dbReference type="GO" id="GO:0006506">
    <property type="term" value="P:GPI anchor biosynthetic process"/>
    <property type="evidence" value="ECO:0000316"/>
    <property type="project" value="PomBase"/>
</dbReference>
<dbReference type="GO" id="GO:0051321">
    <property type="term" value="P:meiotic cell cycle"/>
    <property type="evidence" value="ECO:0007669"/>
    <property type="project" value="UniProtKB-KW"/>
</dbReference>
<dbReference type="InterPro" id="IPR009447">
    <property type="entry name" value="PIGW/GWT1"/>
</dbReference>
<dbReference type="PANTHER" id="PTHR20661">
    <property type="entry name" value="PHOSPHATIDYLINOSITOL-GLYCAN BIOSYNTHESIS CLASS W PROTEIN"/>
    <property type="match status" value="1"/>
</dbReference>
<dbReference type="PANTHER" id="PTHR20661:SF0">
    <property type="entry name" value="PHOSPHATIDYLINOSITOL-GLYCAN BIOSYNTHESIS CLASS W PROTEIN"/>
    <property type="match status" value="1"/>
</dbReference>
<dbReference type="Pfam" id="PF06423">
    <property type="entry name" value="GWT1"/>
    <property type="match status" value="1"/>
</dbReference>
<dbReference type="PIRSF" id="PIRSF017321">
    <property type="entry name" value="GWT1"/>
    <property type="match status" value="1"/>
</dbReference>
<comment type="function">
    <text evidence="1 3 4">Probable acetyltransferase, which acetylates the inositol ring of phosphatidylinositol during biosynthesis of GPI-anchor (By similarity). Has a role in meiosis.</text>
</comment>
<comment type="pathway">
    <text>Glycolipid biosynthesis; glycosylphosphatidylinositol-anchor biosynthesis.</text>
</comment>
<comment type="subcellular location">
    <subcellularLocation>
        <location evidence="1">Endoplasmic reticulum membrane</location>
        <topology evidence="1">Multi-pass membrane protein</topology>
    </subcellularLocation>
</comment>
<comment type="similarity">
    <text evidence="5">Belongs to the PIGW family.</text>
</comment>
<organism>
    <name type="scientific">Schizosaccharomyces pombe (strain 972 / ATCC 24843)</name>
    <name type="common">Fission yeast</name>
    <dbReference type="NCBI Taxonomy" id="284812"/>
    <lineage>
        <taxon>Eukaryota</taxon>
        <taxon>Fungi</taxon>
        <taxon>Dikarya</taxon>
        <taxon>Ascomycota</taxon>
        <taxon>Taphrinomycotina</taxon>
        <taxon>Schizosaccharomycetes</taxon>
        <taxon>Schizosaccharomycetales</taxon>
        <taxon>Schizosaccharomycetaceae</taxon>
        <taxon>Schizosaccharomyces</taxon>
    </lineage>
</organism>
<evidence type="ECO:0000250" key="1"/>
<evidence type="ECO:0000255" key="2"/>
<evidence type="ECO:0000269" key="3">
    <source>
    </source>
</evidence>
<evidence type="ECO:0000269" key="4">
    <source>
    </source>
</evidence>
<evidence type="ECO:0000305" key="5"/>
<gene>
    <name type="primary">gwt1</name>
    <name type="synonym">mug59</name>
    <name type="ORF">SPAC144.10c</name>
</gene>
<keyword id="KW-0012">Acyltransferase</keyword>
<keyword id="KW-0256">Endoplasmic reticulum</keyword>
<keyword id="KW-0325">Glycoprotein</keyword>
<keyword id="KW-0337">GPI-anchor biosynthesis</keyword>
<keyword id="KW-0469">Meiosis</keyword>
<keyword id="KW-0472">Membrane</keyword>
<keyword id="KW-1185">Reference proteome</keyword>
<keyword id="KW-0808">Transferase</keyword>
<keyword id="KW-0812">Transmembrane</keyword>
<keyword id="KW-1133">Transmembrane helix</keyword>
<feature type="chain" id="PRO_0000215187" description="GPI-anchored wall transfer protein 1">
    <location>
        <begin position="1"/>
        <end position="459"/>
    </location>
</feature>
<feature type="transmembrane region" description="Helical" evidence="2">
    <location>
        <begin position="20"/>
        <end position="40"/>
    </location>
</feature>
<feature type="transmembrane region" description="Helical" evidence="2">
    <location>
        <begin position="50"/>
        <end position="70"/>
    </location>
</feature>
<feature type="transmembrane region" description="Helical" evidence="2">
    <location>
        <begin position="73"/>
        <end position="93"/>
    </location>
</feature>
<feature type="transmembrane region" description="Helical" evidence="2">
    <location>
        <begin position="120"/>
        <end position="140"/>
    </location>
</feature>
<feature type="transmembrane region" description="Helical" evidence="2">
    <location>
        <begin position="156"/>
        <end position="176"/>
    </location>
</feature>
<feature type="transmembrane region" description="Helical" evidence="2">
    <location>
        <begin position="188"/>
        <end position="208"/>
    </location>
</feature>
<feature type="transmembrane region" description="Helical" evidence="2">
    <location>
        <begin position="221"/>
        <end position="241"/>
    </location>
</feature>
<feature type="transmembrane region" description="Helical" evidence="2">
    <location>
        <begin position="250"/>
        <end position="270"/>
    </location>
</feature>
<feature type="transmembrane region" description="Helical" evidence="2">
    <location>
        <begin position="290"/>
        <end position="310"/>
    </location>
</feature>
<feature type="transmembrane region" description="Helical" evidence="2">
    <location>
        <begin position="331"/>
        <end position="351"/>
    </location>
</feature>
<feature type="transmembrane region" description="Helical" evidence="2">
    <location>
        <begin position="364"/>
        <end position="384"/>
    </location>
</feature>
<feature type="transmembrane region" description="Helical" evidence="2">
    <location>
        <begin position="405"/>
        <end position="425"/>
    </location>
</feature>
<feature type="transmembrane region" description="Helical" evidence="2">
    <location>
        <begin position="432"/>
        <end position="452"/>
    </location>
</feature>
<feature type="glycosylation site" description="N-linked (GlcNAc...) asparagine" evidence="2">
    <location>
        <position position="13"/>
    </location>
</feature>
<proteinExistence type="evidence at protein level"/>
<accession>Q9UTL4</accession>